<accession>P10220</accession>
<accession>B9VQG4</accession>
<accession>Q09I97</accession>
<organism>
    <name type="scientific">Human herpesvirus 1 (strain 17)</name>
    <name type="common">HHV-1</name>
    <name type="synonym">Human herpes simplex virus 1</name>
    <dbReference type="NCBI Taxonomy" id="10299"/>
    <lineage>
        <taxon>Viruses</taxon>
        <taxon>Duplodnaviria</taxon>
        <taxon>Heunggongvirae</taxon>
        <taxon>Peploviricota</taxon>
        <taxon>Herviviricetes</taxon>
        <taxon>Herpesvirales</taxon>
        <taxon>Orthoherpesviridae</taxon>
        <taxon>Alphaherpesvirinae</taxon>
        <taxon>Simplexvirus</taxon>
        <taxon>Simplexvirus humanalpha1</taxon>
        <taxon>Human herpesvirus 1</taxon>
    </lineage>
</organism>
<dbReference type="EC" id="3.4.19.12" evidence="2 4"/>
<dbReference type="EC" id="3.4.22.-" evidence="2 4"/>
<dbReference type="EMBL" id="X14112">
    <property type="protein sequence ID" value="CAA32311.1"/>
    <property type="molecule type" value="Genomic_DNA"/>
</dbReference>
<dbReference type="EMBL" id="DQ889502">
    <property type="protein sequence ID" value="ABI63498.1"/>
    <property type="molecule type" value="Genomic_DNA"/>
</dbReference>
<dbReference type="EMBL" id="FJ593289">
    <property type="protein sequence ID" value="ACM62259.1"/>
    <property type="molecule type" value="Genomic_DNA"/>
</dbReference>
<dbReference type="PIR" id="I30085">
    <property type="entry name" value="WMBEH6"/>
</dbReference>
<dbReference type="RefSeq" id="YP_009137111.1">
    <property type="nucleotide sequence ID" value="NC_001806.2"/>
</dbReference>
<dbReference type="PDB" id="4TT0">
    <property type="method" value="X-ray"/>
    <property type="resolution" value="2.60 A"/>
    <property type="chains" value="A/B=1625-1757"/>
</dbReference>
<dbReference type="PDB" id="4TT1">
    <property type="method" value="X-ray"/>
    <property type="resolution" value="2.75 A"/>
    <property type="chains" value="A/B=1625-1757"/>
</dbReference>
<dbReference type="PDB" id="8XA0">
    <property type="method" value="EM"/>
    <property type="resolution" value="4.00 A"/>
    <property type="chains" value="2/y=3117-3163"/>
</dbReference>
<dbReference type="PDBsum" id="4TT0"/>
<dbReference type="PDBsum" id="4TT1"/>
<dbReference type="PDBsum" id="8XA0"/>
<dbReference type="EMDB" id="EMD-38190"/>
<dbReference type="SMR" id="P10220"/>
<dbReference type="BioGRID" id="971402">
    <property type="interactions" value="8"/>
</dbReference>
<dbReference type="IntAct" id="P10220">
    <property type="interactions" value="3"/>
</dbReference>
<dbReference type="MINT" id="P10220"/>
<dbReference type="MEROPS" id="C76.001"/>
<dbReference type="GeneID" id="2703357"/>
<dbReference type="KEGG" id="vg:2703357"/>
<dbReference type="EvolutionaryTrace" id="P10220"/>
<dbReference type="Proteomes" id="UP000009294">
    <property type="component" value="Segment"/>
</dbReference>
<dbReference type="Proteomes" id="UP000180652">
    <property type="component" value="Segment"/>
</dbReference>
<dbReference type="GO" id="GO:0030430">
    <property type="term" value="C:host cell cytoplasm"/>
    <property type="evidence" value="ECO:0000314"/>
    <property type="project" value="AgBase"/>
</dbReference>
<dbReference type="GO" id="GO:0042025">
    <property type="term" value="C:host cell nucleus"/>
    <property type="evidence" value="ECO:0007669"/>
    <property type="project" value="UniProtKB-SubCell"/>
</dbReference>
<dbReference type="GO" id="GO:0019033">
    <property type="term" value="C:viral tegument"/>
    <property type="evidence" value="ECO:0000314"/>
    <property type="project" value="CACAO"/>
</dbReference>
<dbReference type="GO" id="GO:0004843">
    <property type="term" value="F:cysteine-type deubiquitinase activity"/>
    <property type="evidence" value="ECO:0007669"/>
    <property type="project" value="UniProtKB-EC"/>
</dbReference>
<dbReference type="GO" id="GO:0019784">
    <property type="term" value="F:deNEDDylase activity"/>
    <property type="evidence" value="ECO:0007669"/>
    <property type="project" value="InterPro"/>
</dbReference>
<dbReference type="GO" id="GO:0101005">
    <property type="term" value="F:deubiquitinase activity"/>
    <property type="evidence" value="ECO:0000314"/>
    <property type="project" value="UniProt"/>
</dbReference>
<dbReference type="GO" id="GO:0039708">
    <property type="term" value="P:nuclear capsid assembly"/>
    <property type="evidence" value="ECO:0000315"/>
    <property type="project" value="AgBase"/>
</dbReference>
<dbReference type="GO" id="GO:0006508">
    <property type="term" value="P:proteolysis"/>
    <property type="evidence" value="ECO:0007669"/>
    <property type="project" value="UniProtKB-KW"/>
</dbReference>
<dbReference type="GO" id="GO:0039648">
    <property type="term" value="P:symbiont-mediated perturbation of host ubiquitin-like protein modification"/>
    <property type="evidence" value="ECO:0007669"/>
    <property type="project" value="UniProtKB-KW"/>
</dbReference>
<dbReference type="GO" id="GO:0039537">
    <property type="term" value="P:symbiont-mediated suppression of cytoplasmic pattern recognition receptor signaling pathway"/>
    <property type="evidence" value="ECO:0000314"/>
    <property type="project" value="UniProt"/>
</dbReference>
<dbReference type="GO" id="GO:0039693">
    <property type="term" value="P:viral DNA genome replication"/>
    <property type="evidence" value="ECO:0007669"/>
    <property type="project" value="InterPro"/>
</dbReference>
<dbReference type="FunFam" id="3.90.70.120:FF:000001">
    <property type="entry name" value="Large tegument protein"/>
    <property type="match status" value="1"/>
</dbReference>
<dbReference type="Gene3D" id="3.90.70.120">
    <property type="match status" value="1"/>
</dbReference>
<dbReference type="HAMAP" id="MF_04044">
    <property type="entry name" value="HSV_LTP"/>
    <property type="match status" value="1"/>
</dbReference>
<dbReference type="InterPro" id="IPR005210">
    <property type="entry name" value="Herpes_LT_deneddylase"/>
</dbReference>
<dbReference type="InterPro" id="IPR006928">
    <property type="entry name" value="Herpes_teg_USP"/>
</dbReference>
<dbReference type="InterPro" id="IPR034702">
    <property type="entry name" value="HSV_LTP"/>
</dbReference>
<dbReference type="InterPro" id="IPR038765">
    <property type="entry name" value="Papain-like_cys_pep_sf"/>
</dbReference>
<dbReference type="Pfam" id="PF04843">
    <property type="entry name" value="Herpes_teg_N"/>
    <property type="match status" value="1"/>
</dbReference>
<dbReference type="Pfam" id="PF03586">
    <property type="entry name" value="Herpes_UL36"/>
    <property type="match status" value="1"/>
</dbReference>
<dbReference type="SUPFAM" id="SSF54001">
    <property type="entry name" value="Cysteine proteinases"/>
    <property type="match status" value="1"/>
</dbReference>
<dbReference type="PROSITE" id="PS51521">
    <property type="entry name" value="HTUSP"/>
    <property type="match status" value="1"/>
</dbReference>
<protein>
    <recommendedName>
        <fullName evidence="2">Large tegument protein deneddylase</fullName>
        <ecNumber evidence="2 4">3.4.19.12</ecNumber>
        <ecNumber evidence="2 4">3.4.22.-</ecNumber>
    </recommendedName>
</protein>
<proteinExistence type="evidence at protein level"/>
<evidence type="ECO:0000250" key="1">
    <source>
        <dbReference type="UniProtKB" id="P03186"/>
    </source>
</evidence>
<evidence type="ECO:0000255" key="2">
    <source>
        <dbReference type="HAMAP-Rule" id="MF_04044"/>
    </source>
</evidence>
<evidence type="ECO:0000256" key="3">
    <source>
        <dbReference type="SAM" id="MobiDB-lite"/>
    </source>
</evidence>
<evidence type="ECO:0000269" key="4">
    <source>
    </source>
</evidence>
<evidence type="ECO:0000269" key="5">
    <source>
    </source>
</evidence>
<evidence type="ECO:0000269" key="6">
    <source>
    </source>
</evidence>
<evidence type="ECO:0000269" key="7">
    <source>
    </source>
</evidence>
<evidence type="ECO:0000269" key="8">
    <source>
    </source>
</evidence>
<evidence type="ECO:0000269" key="9">
    <source>
    </source>
</evidence>
<evidence type="ECO:0000269" key="10">
    <source>
    </source>
</evidence>
<evidence type="ECO:0000269" key="11">
    <source>
    </source>
</evidence>
<evidence type="ECO:0000269" key="12">
    <source>
    </source>
</evidence>
<evidence type="ECO:0000269" key="13">
    <source>
    </source>
</evidence>
<evidence type="ECO:0000269" key="14">
    <source>
    </source>
</evidence>
<evidence type="ECO:0000269" key="15">
    <source>
    </source>
</evidence>
<evidence type="ECO:0000269" key="16">
    <source>
    </source>
</evidence>
<evidence type="ECO:0000269" key="17">
    <source>
    </source>
</evidence>
<evidence type="ECO:0000269" key="18">
    <source>
    </source>
</evidence>
<evidence type="ECO:0007829" key="19">
    <source>
        <dbReference type="PDB" id="4TT0"/>
    </source>
</evidence>
<evidence type="ECO:0007829" key="20">
    <source>
        <dbReference type="PDB" id="4TT1"/>
    </source>
</evidence>
<organismHost>
    <name type="scientific">Homo sapiens</name>
    <name type="common">Human</name>
    <dbReference type="NCBI Taxonomy" id="9606"/>
</organismHost>
<comment type="function">
    <text evidence="2 5 7 9 12 13 14 15 16 17">Large tegument protein that plays multiple roles in the viral cycle. During viral entry, remains associated with the capsid while most of the tegument is detached and participates in the capsid transport toward the host nucleus. Plays a role in the routing of the capsid at the nuclear pore complex and subsequent uncoating. Within the host nucleus, acts as a deneddylase and promotes the degradation of nuclear CRLs (cullin-RING ubiquitin ligases) and thereby stabilizes nuclear CRL substrates, while cytoplasmic CRLs remain unaffected. These modifications prevent host cell cycle S-phase progression and create a favorable environment allowing efficient viral genome replication. Participates later in the secondary envelopment of capsids. Indeed, plays a linker role for the association of the outer viral tegument to the capsids together with the inner tegument protein.</text>
</comment>
<comment type="catalytic activity">
    <reaction evidence="2 4">
        <text>Thiol-dependent hydrolysis of ester, thioester, amide, peptide and isopeptide bonds formed by the C-terminal Gly of ubiquitin (a 76-residue protein attached to proteins as an intracellular targeting signal).</text>
        <dbReference type="EC" id="3.4.19.12"/>
    </reaction>
</comment>
<comment type="subunit">
    <text evidence="1 2 6 11 13 15 18">Interacts with host CUL1 and CUL4A; these interactions inhibit the E3 ligase activity of cullins. Interacts with inner tegument protein. Interacts with capsid vertex specific component CVC2. Interacts with the major capsid protein/MCP (By similarity). Interacts with VP16; this interaction is important for outer tegument association to the capsid. May form homodimers.</text>
</comment>
<comment type="interaction">
    <interactant intactId="EBI-7694334">
        <id>P10220</id>
    </interactant>
    <interactant intactId="EBI-6880600">
        <id>P10221</id>
        <label>UL37</label>
    </interactant>
    <organismsDiffer>false</organismsDiffer>
    <experiments>2</experiments>
</comment>
<comment type="subcellular location">
    <subcellularLocation>
        <location evidence="2 10">Virion tegument</location>
    </subcellularLocation>
    <subcellularLocation>
        <location evidence="2 6 8 17">Host cytoplasm</location>
    </subcellularLocation>
    <subcellularLocation>
        <location evidence="2 6 8">Host nucleus</location>
    </subcellularLocation>
    <text evidence="2">Tightly associated with the capsid.</text>
</comment>
<comment type="PTM">
    <text evidence="7">Proteolytically processed, possibly into several polypeptides. Enzymatic activity is only detectable following cleavage of the UL36 protein, which occurs late during viral replication.</text>
</comment>
<comment type="similarity">
    <text evidence="2">Belongs to the herpesviridae large tegument protein family.</text>
</comment>
<name>LTP_HHV11</name>
<feature type="chain" id="PRO_0000116035" description="Large tegument protein deneddylase">
    <location>
        <begin position="1"/>
        <end position="3164"/>
    </location>
</feature>
<feature type="domain" description="Peptidase C76" evidence="2">
    <location>
        <begin position="45"/>
        <end position="263"/>
    </location>
</feature>
<feature type="repeat" description="1">
    <location>
        <begin position="2911"/>
        <end position="2912"/>
    </location>
</feature>
<feature type="repeat" description="2">
    <location>
        <begin position="2913"/>
        <end position="2914"/>
    </location>
</feature>
<feature type="repeat" description="3">
    <location>
        <begin position="2915"/>
        <end position="2916"/>
    </location>
</feature>
<feature type="repeat" description="4">
    <location>
        <begin position="2917"/>
        <end position="2918"/>
    </location>
</feature>
<feature type="repeat" description="5">
    <location>
        <begin position="2919"/>
        <end position="2920"/>
    </location>
</feature>
<feature type="repeat" description="6">
    <location>
        <begin position="2921"/>
        <end position="2922"/>
    </location>
</feature>
<feature type="repeat" description="7">
    <location>
        <begin position="2923"/>
        <end position="2924"/>
    </location>
</feature>
<feature type="repeat" description="8">
    <location>
        <begin position="2925"/>
        <end position="2926"/>
    </location>
</feature>
<feature type="repeat" description="9">
    <location>
        <begin position="2927"/>
        <end position="2928"/>
    </location>
</feature>
<feature type="repeat" description="10">
    <location>
        <begin position="2929"/>
        <end position="2930"/>
    </location>
</feature>
<feature type="repeat" description="11">
    <location>
        <begin position="2931"/>
        <end position="2932"/>
    </location>
</feature>
<feature type="repeat" description="12">
    <location>
        <begin position="2933"/>
        <end position="2934"/>
    </location>
</feature>
<feature type="repeat" description="13">
    <location>
        <begin position="2935"/>
        <end position="2936"/>
    </location>
</feature>
<feature type="repeat" description="14">
    <location>
        <begin position="2937"/>
        <end position="2938"/>
    </location>
</feature>
<feature type="repeat" description="15">
    <location>
        <begin position="2939"/>
        <end position="2940"/>
    </location>
</feature>
<feature type="repeat" description="16">
    <location>
        <begin position="2941"/>
        <end position="2942"/>
    </location>
</feature>
<feature type="repeat" description="17">
    <location>
        <begin position="2943"/>
        <end position="2944"/>
    </location>
</feature>
<feature type="repeat" description="18">
    <location>
        <begin position="2945"/>
        <end position="2946"/>
    </location>
</feature>
<feature type="repeat" description="19">
    <location>
        <begin position="2947"/>
        <end position="2948"/>
    </location>
</feature>
<feature type="repeat" description="20">
    <location>
        <begin position="2949"/>
        <end position="2950"/>
    </location>
</feature>
<feature type="repeat" description="21">
    <location>
        <begin position="2951"/>
        <end position="2952"/>
    </location>
</feature>
<feature type="repeat" description="22">
    <location>
        <begin position="2953"/>
        <end position="2954"/>
    </location>
</feature>
<feature type="repeat" description="23">
    <location>
        <begin position="2955"/>
        <end position="2956"/>
    </location>
</feature>
<feature type="repeat" description="24">
    <location>
        <begin position="2957"/>
        <end position="2958"/>
    </location>
</feature>
<feature type="repeat" description="25">
    <location>
        <begin position="2959"/>
        <end position="2960"/>
    </location>
</feature>
<feature type="repeat" description="26">
    <location>
        <begin position="2961"/>
        <end position="2962"/>
    </location>
</feature>
<feature type="repeat" description="27">
    <location>
        <begin position="2963"/>
        <end position="2964"/>
    </location>
</feature>
<feature type="repeat" description="28">
    <location>
        <begin position="2965"/>
        <end position="2966"/>
    </location>
</feature>
<feature type="repeat" description="29">
    <location>
        <begin position="2967"/>
        <end position="2968"/>
    </location>
</feature>
<feature type="repeat" description="30">
    <location>
        <begin position="2969"/>
        <end position="2970"/>
    </location>
</feature>
<feature type="repeat" description="31">
    <location>
        <begin position="2971"/>
        <end position="2972"/>
    </location>
</feature>
<feature type="repeat" description="32">
    <location>
        <begin position="2973"/>
        <end position="2974"/>
    </location>
</feature>
<feature type="repeat" description="33">
    <location>
        <begin position="2975"/>
        <end position="2976"/>
    </location>
</feature>
<feature type="repeat" description="34">
    <location>
        <begin position="2977"/>
        <end position="2978"/>
    </location>
</feature>
<feature type="repeat" description="35">
    <location>
        <begin position="2979"/>
        <end position="2980"/>
    </location>
</feature>
<feature type="region of interest" description="Deubiquitination activity" evidence="2">
    <location>
        <begin position="1"/>
        <end position="273"/>
    </location>
</feature>
<feature type="region of interest" description="Disordered" evidence="3">
    <location>
        <begin position="289"/>
        <end position="508"/>
    </location>
</feature>
<feature type="region of interest" description="Nuclear localization signal" evidence="8 16">
    <location>
        <begin position="426"/>
        <end position="432"/>
    </location>
</feature>
<feature type="region of interest" description="Interaction with inner tegument protein" evidence="2">
    <location>
        <begin position="579"/>
        <end position="609"/>
    </location>
</feature>
<feature type="region of interest" description="Interaction with UL37" evidence="11">
    <location>
        <begin position="579"/>
        <end position="609"/>
    </location>
</feature>
<feature type="region of interest" description="Disordered" evidence="3">
    <location>
        <begin position="2296"/>
        <end position="2318"/>
    </location>
</feature>
<feature type="region of interest" description="Disordered" evidence="3">
    <location>
        <begin position="2518"/>
        <end position="2552"/>
    </location>
</feature>
<feature type="region of interest" description="Disordered" evidence="3">
    <location>
        <begin position="2583"/>
        <end position="3020"/>
    </location>
</feature>
<feature type="region of interest" description="35 X 2 AA tandem repeats of P-Q">
    <location>
        <begin position="2911"/>
        <end position="2980"/>
    </location>
</feature>
<feature type="compositionally biased region" description="Pro residues" evidence="3">
    <location>
        <begin position="308"/>
        <end position="321"/>
    </location>
</feature>
<feature type="compositionally biased region" description="Basic and acidic residues" evidence="3">
    <location>
        <begin position="343"/>
        <end position="353"/>
    </location>
</feature>
<feature type="compositionally biased region" description="Pro residues" evidence="3">
    <location>
        <begin position="365"/>
        <end position="390"/>
    </location>
</feature>
<feature type="compositionally biased region" description="Basic residues" evidence="3">
    <location>
        <begin position="416"/>
        <end position="432"/>
    </location>
</feature>
<feature type="compositionally biased region" description="Pro residues" evidence="3">
    <location>
        <begin position="2653"/>
        <end position="2667"/>
    </location>
</feature>
<feature type="compositionally biased region" description="Low complexity" evidence="3">
    <location>
        <begin position="2668"/>
        <end position="2680"/>
    </location>
</feature>
<feature type="compositionally biased region" description="Basic residues" evidence="3">
    <location>
        <begin position="2681"/>
        <end position="2690"/>
    </location>
</feature>
<feature type="compositionally biased region" description="Pro residues" evidence="3">
    <location>
        <begin position="2722"/>
        <end position="2732"/>
    </location>
</feature>
<feature type="compositionally biased region" description="Low complexity" evidence="3">
    <location>
        <begin position="2834"/>
        <end position="2843"/>
    </location>
</feature>
<feature type="compositionally biased region" description="Pro residues" evidence="3">
    <location>
        <begin position="2844"/>
        <end position="2866"/>
    </location>
</feature>
<feature type="compositionally biased region" description="Polar residues" evidence="3">
    <location>
        <begin position="2886"/>
        <end position="2897"/>
    </location>
</feature>
<feature type="compositionally biased region" description="Pro residues" evidence="3">
    <location>
        <begin position="2912"/>
        <end position="2978"/>
    </location>
</feature>
<feature type="compositionally biased region" description="Polar residues" evidence="3">
    <location>
        <begin position="2999"/>
        <end position="3014"/>
    </location>
</feature>
<feature type="active site" evidence="2 4">
    <location>
        <position position="65"/>
    </location>
</feature>
<feature type="active site" evidence="2">
    <location>
        <position position="197"/>
    </location>
</feature>
<feature type="active site" evidence="2">
    <location>
        <position position="199"/>
    </location>
</feature>
<feature type="site" description="Important for catalytic activity" evidence="2">
    <location>
        <position position="52"/>
    </location>
</feature>
<feature type="sequence variant" description="In strain: Nonneuroinvasive mutant HF10.">
    <original>A</original>
    <variation>T</variation>
    <location>
        <position position="234"/>
    </location>
</feature>
<feature type="sequence variant" description="In strain: Nonneuroinvasive mutant HF10.">
    <original>P</original>
    <variation>T</variation>
    <location>
        <position position="307"/>
    </location>
</feature>
<feature type="sequence variant" description="In strain: Nonneuroinvasive mutant HF10.">
    <location>
        <begin position="375"/>
        <end position="379"/>
    </location>
</feature>
<feature type="sequence variant" description="In strain: Nonneuroinvasive mutant HF10.">
    <original>T</original>
    <variation>P</variation>
    <location>
        <position position="392"/>
    </location>
</feature>
<feature type="sequence variant" description="In strain: Nonneuroinvasive mutant HF10.">
    <original>N</original>
    <variation>S</variation>
    <location>
        <position position="620"/>
    </location>
</feature>
<feature type="sequence variant" description="In strain: Nonneuroinvasive mutant HF10.">
    <original>W</original>
    <variation>R</variation>
    <location>
        <position position="624"/>
    </location>
</feature>
<feature type="sequence variant" description="In strain: Nonneuroinvasive mutant HF10.">
    <original>A</original>
    <variation>V</variation>
    <location>
        <position position="671"/>
    </location>
</feature>
<feature type="sequence variant" description="In strain: Nonneuroinvasive mutant HF10.">
    <original>I</original>
    <variation>M</variation>
    <location>
        <position position="885"/>
    </location>
</feature>
<feature type="sequence variant" description="In strain: Nonneuroinvasive mutant HF10.">
    <original>A</original>
    <variation>V</variation>
    <location>
        <position position="1023"/>
    </location>
</feature>
<feature type="sequence variant" description="In strain: Nonneuroinvasive mutant HF10.">
    <original>V</original>
    <variation>G</variation>
    <location>
        <position position="1244"/>
    </location>
</feature>
<feature type="sequence variant" description="In strain: Nonneuroinvasive mutant HF10.">
    <original>G</original>
    <variation>S</variation>
    <location>
        <position position="1373"/>
    </location>
</feature>
<feature type="sequence variant" description="In strain: Nonneuroinvasive mutant HF10.">
    <original>G</original>
    <variation>D</variation>
    <location>
        <position position="1389"/>
    </location>
</feature>
<feature type="sequence variant" description="In strain: Nonneuroinvasive mutant HF10.">
    <original>T</original>
    <variation>M</variation>
    <location>
        <position position="1419"/>
    </location>
</feature>
<feature type="sequence variant" description="In strain: Nonneuroinvasive mutant HF10.">
    <original>A</original>
    <variation>T</variation>
    <location>
        <position position="1470"/>
    </location>
</feature>
<feature type="sequence variant" description="In strain: Nonneuroinvasive mutant HF10.">
    <original>A</original>
    <variation>S</variation>
    <location>
        <position position="1604"/>
    </location>
</feature>
<feature type="sequence variant" description="In strain: 17 syn+ and Nonneuroinvasive mutant HF10.">
    <original>H</original>
    <variation>D</variation>
    <location>
        <position position="1605"/>
    </location>
</feature>
<feature type="sequence variant" description="In strain: Nonneuroinvasive mutant HF10.">
    <original>E</original>
    <variation>D</variation>
    <location>
        <position position="1642"/>
    </location>
</feature>
<feature type="sequence variant" description="In strain: Nonneuroinvasive mutant HF10.">
    <original>V</original>
    <variation>L</variation>
    <location>
        <position position="1695"/>
    </location>
</feature>
<feature type="sequence variant" description="In strain: Nonneuroinvasive mutant HF10.">
    <original>G</original>
    <variation>S</variation>
    <location>
        <position position="1729"/>
    </location>
</feature>
<feature type="sequence variant" description="In strain: Nonneuroinvasive mutant HF10.">
    <original>R</original>
    <variation>C</variation>
    <location>
        <position position="1777"/>
    </location>
</feature>
<feature type="sequence variant" description="In strain: Nonneuroinvasive mutant HF10.">
    <original>V</original>
    <variation>M</variation>
    <location>
        <position position="1888"/>
    </location>
</feature>
<feature type="sequence variant" description="In strain: Nonneuroinvasive mutant HF10.">
    <original>E</original>
    <variation>K</variation>
    <location>
        <position position="1973"/>
    </location>
</feature>
<feature type="sequence variant" description="In strain: Nonneuroinvasive mutant HF10.">
    <original>V</original>
    <variation>A</variation>
    <location>
        <position position="2267"/>
    </location>
</feature>
<feature type="sequence variant" description="In strain: Nonneuroinvasive mutant HF10.">
    <original>V</original>
    <variation>A</variation>
    <location>
        <position position="2540"/>
    </location>
</feature>
<feature type="sequence variant" description="In strain: Nonneuroinvasive mutant HF10.">
    <original>A</original>
    <variation>T</variation>
    <location>
        <position position="2545"/>
    </location>
</feature>
<feature type="sequence variant" description="In strain: Nonneuroinvasive mutant HF10.">
    <original>F</original>
    <variation>V</variation>
    <location>
        <position position="2646"/>
    </location>
</feature>
<feature type="sequence variant" description="In strain: Nonneuroinvasive mutant HF10.">
    <original>P</original>
    <variation>T</variation>
    <location>
        <position position="2666"/>
    </location>
</feature>
<feature type="sequence variant" description="In strain: Nonneuroinvasive mutant HF10.">
    <original>A</original>
    <variation>S</variation>
    <location>
        <position position="2748"/>
    </location>
</feature>
<feature type="sequence variant" description="In strain: Nonneuroinvasive mutant HF10.">
    <original>A</original>
    <variation>T</variation>
    <location>
        <position position="2856"/>
    </location>
</feature>
<feature type="sequence variant" description="In strain: Nonneuroinvasive mutant HF10.">
    <original>A</original>
    <variation>T</variation>
    <location>
        <position position="2875"/>
    </location>
</feature>
<feature type="sequence variant" description="In strain: Nonneuroinvasive mutant HF10.">
    <original>T</original>
    <variation>A</variation>
    <location>
        <position position="2894"/>
    </location>
</feature>
<feature type="sequence variant" description="In strain: Nonneuroinvasive mutant HF10.">
    <location>
        <begin position="2973"/>
        <end position="2978"/>
    </location>
</feature>
<feature type="sequence variant" description="In strain: Nonneuroinvasive mutant HF10.">
    <original>V</original>
    <variation>A</variation>
    <location>
        <position position="3095"/>
    </location>
</feature>
<feature type="mutagenesis site" description="Complete loss of deubiquitination activity." evidence="4">
    <original>C</original>
    <variation>A</variation>
    <location>
        <position position="65"/>
    </location>
</feature>
<feature type="helix" evidence="19">
    <location>
        <begin position="1625"/>
        <end position="1665"/>
    </location>
</feature>
<feature type="helix" evidence="19">
    <location>
        <begin position="1672"/>
        <end position="1678"/>
    </location>
</feature>
<feature type="helix" evidence="19">
    <location>
        <begin position="1684"/>
        <end position="1720"/>
    </location>
</feature>
<feature type="turn" evidence="19">
    <location>
        <begin position="1723"/>
        <end position="1725"/>
    </location>
</feature>
<feature type="strand" evidence="20">
    <location>
        <begin position="1729"/>
        <end position="1731"/>
    </location>
</feature>
<feature type="helix" evidence="19">
    <location>
        <begin position="1736"/>
        <end position="1738"/>
    </location>
</feature>
<feature type="helix" evidence="19">
    <location>
        <begin position="1739"/>
        <end position="1746"/>
    </location>
</feature>
<sequence length="3164" mass="335862">MGGGNNTNPGGPVHKQAGSLASRAHMIAGTPPHSTMERGGDRDIVVTGARNQFAPDLEPGGSVSCMRSSLSFLSLIFDVGPRDVLSAEAIEGCLVEGGEWTRATAGPGPPRMCSIVELPNFLEYPGARGGLRCVFSRVYGEVGFFGEPAAGLLETQCPAHTFFAGPWALRPLSYTLLTIGPLGMGLFRDGDTAYLFDPHGLPEGTPAFIAKVRAGDMYPYLTYYTRDRPDVRWAGAMVFFVPSGPEPAAPADLTAAALHLYGASETYLQDEAFSERRVAITHPLRGEIAGLGEPCVGVGPREGVGGPGPHPPTAAQSPPPTRARRDDRASETSRGTAGPSAKPEAKRPNRAPDDVWAVALKGTPPTDPPSADPPSADPPSAIPPPPPSAPKTPAAEAAEEDDDDMRVLEMGVVPVGRHRARYSAGLPKRRRPTWTPPSSVEDLTSGEKTKRSAPPAKTKKKSTPKGKTPVGAAVPASVPEPVLASAPPDPAGPPVAEAGEDDGPTVPASSQALEALKTRRSPEPPGADLAQLFEAHPNVAATAVKFTACSAALAREVAACSRLTISALRSPYPASPGLLELCVIFFFERVLAFLIENGARTHTQAGVAGPAAALLEFTLNMLPWKTAVGDFLASTRLSLADVAAHLPLVQHVLDENSLIGRLALAKLILVARDVIRETDAFYGELADLELQLRAAPPANLYTRLGEWLLERSQAHPDTLFAPATPTHPEPLLYRVQALAKFARGEEIRVEAEDRQMREALDALARGVDAVSQHAGPLGVMPAPAGAAPQGAPRPPPLGPEAVQVRLEEVRTQARRAIEGAVKEYFYRGAVYSAKALQASDNNDRRFHVASAAVVPVVQLLESLPVFDQHTRDIAQRAAIPAPPPIATSPTAILLRDLIQRGQTLDAPEDLAAWLSVLTDAANQGLIERKPLDELARSIRDINDQQARRSSGLAELRRFDALDAALGQQLDSDAAFVPAPGASPYPDDGGLSPEATRMAEEALRQARAMDAAKLTAELAPDARARLRERARSLEAMLEGARERAKVARDAREKFLHKLQGVLRPLPDFVGLKACPAVLATLRASLPAGWSDLPEAVRGAPPEVTAALRADMWGLLGQYRDALEHPTPDTATALSGLHPSFVVVLKNLFADAPETPFLLQFFADHAPIIAHAVSNAINAGSAAVATADPASTVDAAVRAHRVLVDAVTALGAAASDPASPLAFLAAMADSAAGYVKATRLALDARVAIAQLTTLGSAAADLVVQVRRAANQPEGEHASLIQAATRATTGARESLAGHEGRFGGLLHAEGTAGDHSPSGRALQELGKVIGATRRRADELEAATADLREKMAAQRARSSHERWAADVEAVLDRVESGAEFDVVELRRLQALAGTHGYNPRDFRKRAEQALGTNAKAVTLALETALAFNPYTPENQRHPMLPPLAAIHRIDWSAAFGAAADTYADMFRVDTEPLARLLRLAGGLLERAQANDGFIDYHEAVLHLSEDLGGVPALRQYVPFFQKGYAEYVDIRDRLDALRADARRAIGSVALDLAAAAEEISAVRNDPAAAAELVRAGVTLPCPSEDALVACVAALERVDQSPVKDTAYAHYVAFVTRQDLADTKDAVVRAKQQRAEATERVTAGLREVLAARERRAQLEAEGLANLKTLLKVVAVPATVAKTLDQARSAEEIADQVEILVDQTEKARELDVQAVAWLEHAQRTFETHPLSAASGDGPGLLTRQGARLQALFDTRRRVEALRRSLEEAEAEWDEVWGRFGRVRGGAWKSPEGFRAACEQLRALQDTTNTVSGLRAQRDYERLPAKYQGVLGAKSAERAGAVEELGGRVAQHADLSARLRDEVVPRVAWEMNFDTLGGLLAEFDAVAGDLAPWAVEEFRGARELIQRRMGLYSAYAKATGQTGAGAAAAPAPLLVDLRALDARARASAPPGQEADPQMLRRRGEAYLRVSGGPGPLVLREATSTLDRPFAPSFLVPDGTPLQYALCFPAVTDKLGALLMCPEAACIRPPLPTDTLESASTVTAMYVLTVINRLQLALSDAQAANFQLFGRFVRHRQARWGASMDAAAELYVALVATTLTREFGCRWAQLEWGGDAAAPGPPLGPQSSTRHRVSFNENDVLVALVASSPEHIYTFWRLDLVRQHEYMHLTLPRAFQNAADSMLFVQRLTPHPDARIRVLPAFSAGGPPTRGLMFGTRLADWRRGKLSETDPLAPWRSVPELGTERGAALGKLSPAQALAAVSVLGRMCLPSTALVALWTCMFPDDYTEYDSFDALLTARLESGQTLSPSGGREASPPAPPNALYRPTGQHVAVPAAATHRTPAARVTAMDLVLAAVLLGAPVVVALRNTTAFSRESELELCLTLFDSRARGPDAALRDAVSSDIETWAVRLLHADLNPIENACLAAQLPRLSALIAERPLARGPPCLVLVDISMTPVAVLWENPDPPGPPDVRFVGSEATEELPFVAGGEDVLAASATDEDPFLARAILGRPFDASLLSGELFPGHPVYQRAPDDQSPSVPNPTPGPVDLVGAEGSLGPGSLAPTLFTDATPGEPVPPRMWAWIHGLEELASDDSGGPAPLLAPDPLSPTADQSVPTSQCAPRPPGPAVTAREARPGVPAESTRPAPVGPRDDFRRLPSPQSSPAPPDATAPRPPASSRASAASSSGSRARRHRRARSLARATQASATTQGWRPPALPDTVAPVTDFARPPAPPKPPEPAPHALVSGVPLPLGPQAAGQASPALPIDPVPPPVATGTVLPGGENRRPPLTSGPAPTPPRVPVGGPQRRLTRPAVASLSESRESLPSPWDPADPTAPVLGRNPAEPTSSSPAGPSPPPPAVQPVAPPPTSGPPPTYLTLEGGVAPGGPVSRRPTTRQPVATPTTSARPRGHLTVSRLSAPQPQPQPQPQPQPQPQPQPQPQPQPQPQPQPQPQPQPQPQPQPQPQPQPQPQPQPQPQPQPQPQPQPQPQNGHVAPGEYPAVRFRAPQNRPSVPASASSTNPRTGSSLSGVSSWASSLALHIDATPPPVSLLQTLYVSDDEDSDATSLFLSDSEAEALDPLPGEPHSPITNEPFSALSADDSQEVTRLQFGPPPVSANAVLSRRYVQRTGRSALAVLIRACYRLQQQLQRTRRALLHHSDAVLTSLHHVRMLLG</sequence>
<keyword id="KW-0002">3D-structure</keyword>
<keyword id="KW-1035">Host cytoplasm</keyword>
<keyword id="KW-1048">Host nucleus</keyword>
<keyword id="KW-0945">Host-virus interaction</keyword>
<keyword id="KW-0378">Hydrolase</keyword>
<keyword id="KW-1127">Modulation of host ubiquitin pathway by viral deubiquitinase</keyword>
<keyword id="KW-1130">Modulation of host ubiquitin pathway by virus</keyword>
<keyword id="KW-0645">Protease</keyword>
<keyword id="KW-1185">Reference proteome</keyword>
<keyword id="KW-0677">Repeat</keyword>
<keyword id="KW-0788">Thiol protease</keyword>
<keyword id="KW-0833">Ubl conjugation pathway</keyword>
<keyword id="KW-0946">Virion</keyword>
<keyword id="KW-0920">Virion tegument</keyword>
<gene>
    <name type="ORF">UL36</name>
</gene>
<reference key="1">
    <citation type="journal article" date="1988" name="J. Gen. Virol.">
        <title>The complete DNA sequence of the long unique region in the genome of herpes simplex virus type 1.</title>
        <authorList>
            <person name="McGeoch D.J."/>
            <person name="Dalrymple M.A."/>
            <person name="Davison A.J."/>
            <person name="Dolan A."/>
            <person name="Frame M.C."/>
            <person name="McNab D."/>
            <person name="Perry L.J."/>
            <person name="Scott J.E."/>
            <person name="Taylor P."/>
        </authorList>
    </citation>
    <scope>NUCLEOTIDE SEQUENCE [LARGE SCALE GENOMIC DNA]</scope>
</reference>
<reference key="2">
    <citation type="journal article" date="2007" name="Microbes Infect.">
        <title>Determination and analysis of the DNA sequence of highly attenuated herpes simplex virus type 1 mutant HF10, a potential oncolytic virus.</title>
        <authorList>
            <person name="Ushijima Y."/>
            <person name="Luo C."/>
            <person name="Goshima F."/>
            <person name="Yamauchi Y."/>
            <person name="Kimura H."/>
            <person name="Nishiyama Y."/>
        </authorList>
    </citation>
    <scope>NUCLEOTIDE SEQUENCE [LARGE SCALE GENOMIC DNA]</scope>
    <source>
        <strain>Nonneuroinvasive mutant HF10</strain>
    </source>
</reference>
<reference key="3">
    <citation type="submission" date="2008-12" db="EMBL/GenBank/DDBJ databases">
        <title>Herpes simplex virus type 1 bacterial artificial chromosome.</title>
        <authorList>
            <person name="Cunningham C."/>
            <person name="Davison A.J."/>
        </authorList>
    </citation>
    <scope>NUCLEOTIDE SEQUENCE [LARGE SCALE GENOMIC DNA]</scope>
    <source>
        <strain>17 syn+</strain>
    </source>
</reference>
<reference key="4">
    <citation type="journal article" date="2005" name="Mol. Cell">
        <title>A deubiquitinating enzyme encoded by HSV-1 belongs to a family of cysteine proteases that is conserved across the family Herpesviridae.</title>
        <authorList>
            <person name="Kattenhorn L.M."/>
            <person name="Korbel G.A."/>
            <person name="Kessler B.M."/>
            <person name="Spooner E."/>
            <person name="Ploegh H.L."/>
        </authorList>
    </citation>
    <scope>CHARACTERIZATION</scope>
    <scope>ACTIVE SITES</scope>
    <scope>MUTAGENESIS OF CYS-65</scope>
    <source>
        <strain>KOS</strain>
    </source>
</reference>
<reference key="5">
    <citation type="journal article" date="2005" name="J. Virol.">
        <title>A deubiquitinating activity is conserved in the large tegument protein of the herpesviridae.</title>
        <authorList>
            <person name="Schlieker C."/>
            <person name="Korbel G.A."/>
            <person name="Kattenhorn L.M."/>
            <person name="Ploegh H.L."/>
        </authorList>
    </citation>
    <scope>FUNCTION</scope>
</reference>
<reference key="6">
    <citation type="journal article" date="2007" name="J. Virol.">
        <title>The capsid and tegument of the alphaherpesviruses are linked by an interaction between the UL25 and VP1/2 proteins.</title>
        <authorList>
            <person name="Coller K.E."/>
            <person name="Lee J.I."/>
            <person name="Ueda A."/>
            <person name="Smith G.A."/>
        </authorList>
    </citation>
    <scope>INTERACTION WITH UL25</scope>
    <scope>SUBCELLULAR LOCATION</scope>
</reference>
<reference key="7">
    <citation type="journal article" date="2008" name="J. Virol.">
        <title>Localization of herpes simplex virus type 1 UL37 in the Golgi complex requires UL36 but not capsid structures.</title>
        <authorList>
            <person name="Desai P."/>
            <person name="Sexton G.L."/>
            <person name="Huang E."/>
            <person name="Person S."/>
        </authorList>
    </citation>
    <scope>INTERACTION WITH UL37</scope>
    <source>
        <strain>KOS</strain>
    </source>
</reference>
<reference key="8">
    <citation type="journal article" date="2008" name="J. Virol.">
        <title>Comprehensive characterization of extracellular herpes simplex virus type 1 virions.</title>
        <authorList>
            <person name="Loret S."/>
            <person name="Guay G."/>
            <person name="Lippe R."/>
        </authorList>
    </citation>
    <scope>SUBCELLULAR LOCATION</scope>
    <source>
        <strain>F</strain>
    </source>
</reference>
<reference key="9">
    <citation type="journal article" date="2008" name="J. Virol.">
        <title>Proteolytic cleavage of VP1-2 is required for release of herpes simplex virus 1 DNA into the nucleus.</title>
        <authorList>
            <person name="Jovasevic V."/>
            <person name="Liang L."/>
            <person name="Roizman B."/>
        </authorList>
    </citation>
    <scope>FUNCTION</scope>
    <scope>PROTEOLYTIC CLEAVAGE</scope>
    <source>
        <strain>F</strain>
    </source>
</reference>
<reference key="10">
    <citation type="journal article" date="2008" name="J. Virol.">
        <title>UL36p is required for efficient transport of membrane-associated herpes simplex virus type 1 along microtubules.</title>
        <authorList>
            <person name="Shanda S.K."/>
            <person name="Wilson D.W."/>
        </authorList>
    </citation>
    <scope>FUNCTION</scope>
</reference>
<reference key="11">
    <citation type="journal article" date="2008" name="J. Virol.">
        <title>Identification of a highly conserved, functional nuclear localization signal within the N-terminal region of herpes simplex virus type 1 VP1-2 tegument protein.</title>
        <authorList>
            <person name="Abaitua F."/>
            <person name="O'Hare P."/>
        </authorList>
    </citation>
    <scope>SUBCELLULAR LOCATION</scope>
    <scope>NUCLEAR LOCALIZATION SIGNAL</scope>
</reference>
<reference key="12">
    <citation type="journal article" date="2009" name="J. Virol.">
        <title>Differing roles of inner tegument proteins pUL36 and pUL37 during entry of herpes simplex virus type 1.</title>
        <authorList>
            <person name="Roberts A.P."/>
            <person name="Abaitua F."/>
            <person name="O'Hare P."/>
            <person name="McNab D."/>
            <person name="Rixon F.J."/>
            <person name="Pasdeloup D."/>
        </authorList>
    </citation>
    <scope>FUNCTION</scope>
    <source>
        <strain>17 syn+</strain>
    </source>
</reference>
<reference key="13">
    <citation type="journal article" date="2010" name="Nat. Cell Biol.">
        <title>A deneddylase encoded by Epstein-Barr virus promotes viral DNA replication by regulating the activity of cullin-RING ligases.</title>
        <authorList>
            <person name="Gastaldello S."/>
            <person name="Hildebrand S."/>
            <person name="Faridani O."/>
            <person name="Callegari S."/>
            <person name="Palmkvist M."/>
            <person name="Di Guglielmo C."/>
            <person name="Masucci M.G."/>
        </authorList>
    </citation>
    <scope>FUNCTION</scope>
</reference>
<reference key="14">
    <citation type="journal article" date="2010" name="J. Virol.">
        <title>The major determinant for addition of tegument protein pUL48 (VP16) to capsids in herpes simplex virus type 1 is the presence of the major tegument protein pUL36 (VP1/2).</title>
        <authorList>
            <person name="Ko D.H."/>
            <person name="Cunningham A.L."/>
            <person name="Diefenbach R.J."/>
        </authorList>
    </citation>
    <scope>FUNCTION</scope>
    <scope>INTERACTION WITH VP16</scope>
</reference>
<reference key="15">
    <citation type="journal article" date="2012" name="J. Virol.">
        <title>The UL36 tegument protein of herpes simplex virus 1 has a composite binding site at the capsid vertices.</title>
        <authorList>
            <person name="Cardone G."/>
            <person name="Newcomb W.W."/>
            <person name="Cheng N."/>
            <person name="Wingfield P.T."/>
            <person name="Trus B.L."/>
            <person name="Brown J.C."/>
            <person name="Steven A.C."/>
        </authorList>
    </citation>
    <scope>FUNCTION</scope>
    <scope>INTERACTION WITH UL19</scope>
</reference>
<reference key="16">
    <citation type="journal article" date="2012" name="J. Virol.">
        <title>A Nuclear localization signal in herpesvirus protein VP1-2 is essential for infection via capsid routing to the nuclear pore.</title>
        <authorList>
            <person name="Abaitua F."/>
            <person name="Hollinshead M."/>
            <person name="Bolstad M."/>
            <person name="Crump C.M."/>
            <person name="O'Hare P."/>
        </authorList>
    </citation>
    <scope>FUNCTION</scope>
    <scope>NUCLEAR LOCALIZATION SIGNAL</scope>
</reference>
<reference key="17">
    <citation type="journal article" date="2013" name="Cell. Microbiol.">
        <title>Cytosolic herpes simplex virus capsids not only require binding inner tegument protein pUL36 but also pUL37 for active transport prior to secondary envelopment.</title>
        <authorList>
            <person name="Sandbaumhueter M."/>
            <person name="Doehner K."/>
            <person name="Schipke J."/>
            <person name="Binz A."/>
            <person name="Pohlmann A."/>
            <person name="Sodeik B."/>
            <person name="Bauerfeind R."/>
        </authorList>
    </citation>
    <scope>FUNCTION</scope>
    <scope>SUBCELLULAR LOCATION</scope>
</reference>
<reference key="18">
    <citation type="journal article" date="2015" name="J. Biol. Chem.">
        <title>Insights into herpesvirus tegument organization from structural analyses of the 970 central residues of HSV-1 UL36 protein.</title>
        <authorList>
            <person name="Scrima N."/>
            <person name="Lepault J."/>
            <person name="Boulard Y."/>
            <person name="Pasdeloup D."/>
            <person name="Bressanelli S."/>
            <person name="Roche S."/>
        </authorList>
    </citation>
    <scope>X-RAY CRYSTALLOGRAPHY (2.60 ANGSTROMS) OF 1625-1757</scope>
    <scope>SUBUNIT</scope>
</reference>